<protein>
    <recommendedName>
        <fullName evidence="3">Endoglucanase gh5</fullName>
        <ecNumber evidence="2">3.2.1.4</ecNumber>
    </recommendedName>
    <alternativeName>
        <fullName evidence="3">Glyoside hydrolase family 5 endoglucanase</fullName>
    </alternativeName>
</protein>
<proteinExistence type="evidence at protein level"/>
<comment type="function">
    <text evidence="2">Endoglucanase (EG) that cleaves the internal beta-1,4-glucosidic bonds in cellulose.</text>
</comment>
<comment type="catalytic activity">
    <reaction evidence="2">
        <text>Endohydrolysis of (1-&gt;4)-beta-D-glucosidic linkages in cellulose, lichenin and cereal beta-D-glucans.</text>
        <dbReference type="EC" id="3.2.1.4"/>
    </reaction>
</comment>
<comment type="activity regulation">
    <text evidence="2">Activity is stimulated by zinc ions, potassium ions and DTT (PubMed:33892036). Activity is inhibited by manganese and chloride ions (PubMed:33892036).</text>
</comment>
<comment type="biophysicochemical properties">
    <kinetics>
        <KM evidence="2">12 mg/ml for carboxymethylcellulose (at pH 4.8 and 55 degrees Celsius)</KM>
        <Vmax evidence="2">556.58 umol/min/mg enzyme toward carboxymethylcellulose (at pH 4.8 and 55 degrees Celsius)</Vmax>
        <text evidence="2">Kcat is 129.41/sec for hydrolysis of carboxymethylcellulose (at pH 4.8 and 55 degrees Celsius).</text>
    </kinetics>
    <phDependence>
        <text evidence="2">Optimum pH is 4.8 (PubMed:33892036). Active from pH 4 to 5 (PubMed:33892036). Activity is significantly reduced at pH 6 and is not observed at pH 7 (PubMed:33892036).</text>
    </phDependence>
    <temperatureDependence>
        <text evidence="2">Optimum temperature is 70 degrees Celsius (PubMed:33892036). Thermostable (PubMed:33892036). Highly stable at 50, 60 and 70 degrees Celsius (PubMed:33892036).</text>
    </temperatureDependence>
</comment>
<comment type="mass spectrometry"/>
<comment type="similarity">
    <text evidence="4">Belongs to the glycosyl hydrolase 5 (cellulase A) family.</text>
</comment>
<organism evidence="3">
    <name type="scientific">Fomes meliae</name>
    <name type="common">Fomitopsis meliae</name>
    <dbReference type="NCBI Taxonomy" id="383679"/>
    <lineage>
        <taxon>Eukaryota</taxon>
        <taxon>Fungi</taxon>
        <taxon>Dikarya</taxon>
        <taxon>Basidiomycota</taxon>
        <taxon>Agaricomycotina</taxon>
        <taxon>Agaricomycetes</taxon>
        <taxon>Polyporales</taxon>
        <taxon>Fomitopsis</taxon>
    </lineage>
</organism>
<name>GUN1_FOMML</name>
<feature type="chain" id="PRO_0000452749" description="Endoglucanase gh5">
    <location>
        <begin position="1"/>
        <end position="27"/>
    </location>
</feature>
<feature type="active site" description="Nucleophile" evidence="1">
    <location>
        <position position="6"/>
    </location>
</feature>
<feature type="non-terminal residue" evidence="3">
    <location>
        <position position="1"/>
    </location>
</feature>
<feature type="non-terminal residue" evidence="3">
    <location>
        <position position="27"/>
    </location>
</feature>
<accession>C0HLV0</accession>
<reference key="1">
    <citation type="journal article" date="2021" name="Int. J. Biol. Macromol.">
        <title>Purification and characterization of novel, thermostable and non-processive GH5 family endoglucanase from Fomitopsis meliae CFA 2.</title>
        <authorList>
            <person name="Patel A."/>
            <person name="Shah A."/>
        </authorList>
    </citation>
    <scope>IDENTIFICATION BY MASS SPECTROMETRY</scope>
    <scope>FUNCTION</scope>
    <scope>ACTIVITY REGULATION</scope>
    <scope>CATALYTIC ACTIVITY</scope>
    <scope>BIOPHYSICOCHEMICAL PROPERTIES</scope>
</reference>
<dbReference type="EC" id="3.2.1.4" evidence="2"/>
<dbReference type="SMR" id="C0HLV0"/>
<dbReference type="GO" id="GO:0008810">
    <property type="term" value="F:cellulase activity"/>
    <property type="evidence" value="ECO:0000314"/>
    <property type="project" value="UniProtKB"/>
</dbReference>
<dbReference type="GO" id="GO:0030245">
    <property type="term" value="P:cellulose catabolic process"/>
    <property type="evidence" value="ECO:0007669"/>
    <property type="project" value="UniProtKB-KW"/>
</dbReference>
<keyword id="KW-0119">Carbohydrate metabolism</keyword>
<keyword id="KW-0136">Cellulose degradation</keyword>
<keyword id="KW-0326">Glycosidase</keyword>
<keyword id="KW-0378">Hydrolase</keyword>
<keyword id="KW-0624">Polysaccharide degradation</keyword>
<evidence type="ECO:0000250" key="1">
    <source>
        <dbReference type="UniProtKB" id="P07982"/>
    </source>
</evidence>
<evidence type="ECO:0000269" key="2">
    <source>
    </source>
</evidence>
<evidence type="ECO:0000303" key="3">
    <source>
    </source>
</evidence>
<evidence type="ECO:0000305" key="4"/>
<sequence>QAVLSETGGGDTASCDEYLYQELAYVK</sequence>